<reference key="1">
    <citation type="journal article" date="2001" name="Genome Res.">
        <title>The complete genome sequence of the lactic acid bacterium Lactococcus lactis ssp. lactis IL1403.</title>
        <authorList>
            <person name="Bolotin A."/>
            <person name="Wincker P."/>
            <person name="Mauger S."/>
            <person name="Jaillon O."/>
            <person name="Malarme K."/>
            <person name="Weissenbach J."/>
            <person name="Ehrlich S.D."/>
            <person name="Sorokin A."/>
        </authorList>
    </citation>
    <scope>NUCLEOTIDE SEQUENCE [LARGE SCALE GENOMIC DNA]</scope>
    <source>
        <strain>IL1403</strain>
    </source>
</reference>
<gene>
    <name evidence="1" type="primary">valS</name>
    <name type="ordered locus">LL2173</name>
    <name type="ORF">L0351</name>
</gene>
<organism>
    <name type="scientific">Lactococcus lactis subsp. lactis (strain IL1403)</name>
    <name type="common">Streptococcus lactis</name>
    <dbReference type="NCBI Taxonomy" id="272623"/>
    <lineage>
        <taxon>Bacteria</taxon>
        <taxon>Bacillati</taxon>
        <taxon>Bacillota</taxon>
        <taxon>Bacilli</taxon>
        <taxon>Lactobacillales</taxon>
        <taxon>Streptococcaceae</taxon>
        <taxon>Lactococcus</taxon>
    </lineage>
</organism>
<accession>Q9CDP6</accession>
<evidence type="ECO:0000255" key="1">
    <source>
        <dbReference type="HAMAP-Rule" id="MF_02004"/>
    </source>
</evidence>
<feature type="chain" id="PRO_0000224493" description="Valine--tRNA ligase">
    <location>
        <begin position="1"/>
        <end position="880"/>
    </location>
</feature>
<feature type="coiled-coil region" evidence="1">
    <location>
        <begin position="808"/>
        <end position="880"/>
    </location>
</feature>
<feature type="short sequence motif" description="'HIGH' region">
    <location>
        <begin position="46"/>
        <end position="56"/>
    </location>
</feature>
<feature type="short sequence motif" description="'KMSKS' region">
    <location>
        <begin position="520"/>
        <end position="524"/>
    </location>
</feature>
<feature type="binding site" evidence="1">
    <location>
        <position position="523"/>
    </location>
    <ligand>
        <name>ATP</name>
        <dbReference type="ChEBI" id="CHEBI:30616"/>
    </ligand>
</feature>
<proteinExistence type="inferred from homology"/>
<name>SYV_LACLA</name>
<dbReference type="EC" id="6.1.1.9" evidence="1"/>
<dbReference type="EMBL" id="AE005176">
    <property type="protein sequence ID" value="AAK06271.1"/>
    <property type="molecule type" value="Genomic_DNA"/>
</dbReference>
<dbReference type="PIR" id="E86896">
    <property type="entry name" value="E86896"/>
</dbReference>
<dbReference type="RefSeq" id="NP_268330.1">
    <property type="nucleotide sequence ID" value="NC_002662.1"/>
</dbReference>
<dbReference type="RefSeq" id="WP_010906358.1">
    <property type="nucleotide sequence ID" value="NC_002662.1"/>
</dbReference>
<dbReference type="SMR" id="Q9CDP6"/>
<dbReference type="PaxDb" id="272623-L0351"/>
<dbReference type="EnsemblBacteria" id="AAK06271">
    <property type="protein sequence ID" value="AAK06271"/>
    <property type="gene ID" value="L0351"/>
</dbReference>
<dbReference type="KEGG" id="lla:L0351"/>
<dbReference type="PATRIC" id="fig|272623.7.peg.2333"/>
<dbReference type="eggNOG" id="COG0525">
    <property type="taxonomic scope" value="Bacteria"/>
</dbReference>
<dbReference type="HOGENOM" id="CLU_001493_0_2_9"/>
<dbReference type="OrthoDB" id="9810365at2"/>
<dbReference type="Proteomes" id="UP000002196">
    <property type="component" value="Chromosome"/>
</dbReference>
<dbReference type="GO" id="GO:0005829">
    <property type="term" value="C:cytosol"/>
    <property type="evidence" value="ECO:0007669"/>
    <property type="project" value="TreeGrafter"/>
</dbReference>
<dbReference type="GO" id="GO:0002161">
    <property type="term" value="F:aminoacyl-tRNA deacylase activity"/>
    <property type="evidence" value="ECO:0007669"/>
    <property type="project" value="InterPro"/>
</dbReference>
<dbReference type="GO" id="GO:0005524">
    <property type="term" value="F:ATP binding"/>
    <property type="evidence" value="ECO:0007669"/>
    <property type="project" value="UniProtKB-UniRule"/>
</dbReference>
<dbReference type="GO" id="GO:0004832">
    <property type="term" value="F:valine-tRNA ligase activity"/>
    <property type="evidence" value="ECO:0007669"/>
    <property type="project" value="UniProtKB-UniRule"/>
</dbReference>
<dbReference type="GO" id="GO:0006438">
    <property type="term" value="P:valyl-tRNA aminoacylation"/>
    <property type="evidence" value="ECO:0007669"/>
    <property type="project" value="UniProtKB-UniRule"/>
</dbReference>
<dbReference type="CDD" id="cd07962">
    <property type="entry name" value="Anticodon_Ia_Val"/>
    <property type="match status" value="1"/>
</dbReference>
<dbReference type="CDD" id="cd00817">
    <property type="entry name" value="ValRS_core"/>
    <property type="match status" value="1"/>
</dbReference>
<dbReference type="FunFam" id="1.10.287.380:FF:000001">
    <property type="entry name" value="Valine--tRNA ligase"/>
    <property type="match status" value="1"/>
</dbReference>
<dbReference type="FunFam" id="1.10.730.10:FF:000014">
    <property type="entry name" value="Valine--tRNA ligase"/>
    <property type="match status" value="1"/>
</dbReference>
<dbReference type="FunFam" id="3.40.50.620:FF:000032">
    <property type="entry name" value="Valine--tRNA ligase"/>
    <property type="match status" value="1"/>
</dbReference>
<dbReference type="FunFam" id="3.40.50.620:FF:000098">
    <property type="entry name" value="Valine--tRNA ligase"/>
    <property type="match status" value="1"/>
</dbReference>
<dbReference type="FunFam" id="3.90.740.10:FF:000005">
    <property type="entry name" value="Valine--tRNA ligase, mitochondrial"/>
    <property type="match status" value="1"/>
</dbReference>
<dbReference type="Gene3D" id="3.40.50.620">
    <property type="entry name" value="HUPs"/>
    <property type="match status" value="2"/>
</dbReference>
<dbReference type="Gene3D" id="1.10.730.10">
    <property type="entry name" value="Isoleucyl-tRNA Synthetase, Domain 1"/>
    <property type="match status" value="1"/>
</dbReference>
<dbReference type="Gene3D" id="1.10.287.380">
    <property type="entry name" value="Valyl-tRNA synthetase, C-terminal domain"/>
    <property type="match status" value="1"/>
</dbReference>
<dbReference type="HAMAP" id="MF_02004">
    <property type="entry name" value="Val_tRNA_synth_type1"/>
    <property type="match status" value="1"/>
</dbReference>
<dbReference type="InterPro" id="IPR001412">
    <property type="entry name" value="aa-tRNA-synth_I_CS"/>
</dbReference>
<dbReference type="InterPro" id="IPR002300">
    <property type="entry name" value="aa-tRNA-synth_Ia"/>
</dbReference>
<dbReference type="InterPro" id="IPR033705">
    <property type="entry name" value="Anticodon_Ia_Val"/>
</dbReference>
<dbReference type="InterPro" id="IPR013155">
    <property type="entry name" value="M/V/L/I-tRNA-synth_anticd-bd"/>
</dbReference>
<dbReference type="InterPro" id="IPR014729">
    <property type="entry name" value="Rossmann-like_a/b/a_fold"/>
</dbReference>
<dbReference type="InterPro" id="IPR010978">
    <property type="entry name" value="tRNA-bd_arm"/>
</dbReference>
<dbReference type="InterPro" id="IPR009080">
    <property type="entry name" value="tRNAsynth_Ia_anticodon-bd"/>
</dbReference>
<dbReference type="InterPro" id="IPR037118">
    <property type="entry name" value="Val-tRNA_synth_C_sf"/>
</dbReference>
<dbReference type="InterPro" id="IPR019499">
    <property type="entry name" value="Val-tRNA_synth_tRNA-bd"/>
</dbReference>
<dbReference type="InterPro" id="IPR009008">
    <property type="entry name" value="Val/Leu/Ile-tRNA-synth_edit"/>
</dbReference>
<dbReference type="InterPro" id="IPR002303">
    <property type="entry name" value="Valyl-tRNA_ligase"/>
</dbReference>
<dbReference type="NCBIfam" id="NF004349">
    <property type="entry name" value="PRK05729.1"/>
    <property type="match status" value="1"/>
</dbReference>
<dbReference type="NCBIfam" id="TIGR00422">
    <property type="entry name" value="valS"/>
    <property type="match status" value="1"/>
</dbReference>
<dbReference type="PANTHER" id="PTHR11946:SF93">
    <property type="entry name" value="VALINE--TRNA LIGASE, CHLOROPLASTIC_MITOCHONDRIAL 2"/>
    <property type="match status" value="1"/>
</dbReference>
<dbReference type="PANTHER" id="PTHR11946">
    <property type="entry name" value="VALYL-TRNA SYNTHETASES"/>
    <property type="match status" value="1"/>
</dbReference>
<dbReference type="Pfam" id="PF08264">
    <property type="entry name" value="Anticodon_1"/>
    <property type="match status" value="1"/>
</dbReference>
<dbReference type="Pfam" id="PF00133">
    <property type="entry name" value="tRNA-synt_1"/>
    <property type="match status" value="2"/>
</dbReference>
<dbReference type="Pfam" id="PF10458">
    <property type="entry name" value="Val_tRNA-synt_C"/>
    <property type="match status" value="1"/>
</dbReference>
<dbReference type="PRINTS" id="PR00986">
    <property type="entry name" value="TRNASYNTHVAL"/>
</dbReference>
<dbReference type="SUPFAM" id="SSF47323">
    <property type="entry name" value="Anticodon-binding domain of a subclass of class I aminoacyl-tRNA synthetases"/>
    <property type="match status" value="1"/>
</dbReference>
<dbReference type="SUPFAM" id="SSF52374">
    <property type="entry name" value="Nucleotidylyl transferase"/>
    <property type="match status" value="1"/>
</dbReference>
<dbReference type="SUPFAM" id="SSF46589">
    <property type="entry name" value="tRNA-binding arm"/>
    <property type="match status" value="1"/>
</dbReference>
<dbReference type="SUPFAM" id="SSF50677">
    <property type="entry name" value="ValRS/IleRS/LeuRS editing domain"/>
    <property type="match status" value="1"/>
</dbReference>
<dbReference type="PROSITE" id="PS00178">
    <property type="entry name" value="AA_TRNA_LIGASE_I"/>
    <property type="match status" value="1"/>
</dbReference>
<keyword id="KW-0030">Aminoacyl-tRNA synthetase</keyword>
<keyword id="KW-0067">ATP-binding</keyword>
<keyword id="KW-0175">Coiled coil</keyword>
<keyword id="KW-0963">Cytoplasm</keyword>
<keyword id="KW-0436">Ligase</keyword>
<keyword id="KW-0547">Nucleotide-binding</keyword>
<keyword id="KW-0648">Protein biosynthesis</keyword>
<keyword id="KW-1185">Reference proteome</keyword>
<comment type="function">
    <text evidence="1">Catalyzes the attachment of valine to tRNA(Val). As ValRS can inadvertently accommodate and process structurally similar amino acids such as threonine, to avoid such errors, it has a 'posttransfer' editing activity that hydrolyzes mischarged Thr-tRNA(Val) in a tRNA-dependent manner.</text>
</comment>
<comment type="catalytic activity">
    <reaction evidence="1">
        <text>tRNA(Val) + L-valine + ATP = L-valyl-tRNA(Val) + AMP + diphosphate</text>
        <dbReference type="Rhea" id="RHEA:10704"/>
        <dbReference type="Rhea" id="RHEA-COMP:9672"/>
        <dbReference type="Rhea" id="RHEA-COMP:9708"/>
        <dbReference type="ChEBI" id="CHEBI:30616"/>
        <dbReference type="ChEBI" id="CHEBI:33019"/>
        <dbReference type="ChEBI" id="CHEBI:57762"/>
        <dbReference type="ChEBI" id="CHEBI:78442"/>
        <dbReference type="ChEBI" id="CHEBI:78537"/>
        <dbReference type="ChEBI" id="CHEBI:456215"/>
        <dbReference type="EC" id="6.1.1.9"/>
    </reaction>
</comment>
<comment type="subunit">
    <text evidence="1">Monomer.</text>
</comment>
<comment type="subcellular location">
    <subcellularLocation>
        <location evidence="1">Cytoplasm</location>
    </subcellularLocation>
</comment>
<comment type="domain">
    <text evidence="1">ValRS has two distinct active sites: one for aminoacylation and one for editing. The misactivated threonine is translocated from the active site to the editing site.</text>
</comment>
<comment type="domain">
    <text evidence="1">The C-terminal coiled-coil domain is crucial for aminoacylation activity.</text>
</comment>
<comment type="similarity">
    <text evidence="1">Belongs to the class-I aminoacyl-tRNA synthetase family. ValS type 1 subfamily.</text>
</comment>
<protein>
    <recommendedName>
        <fullName evidence="1">Valine--tRNA ligase</fullName>
        <ecNumber evidence="1">6.1.1.9</ecNumber>
    </recommendedName>
    <alternativeName>
        <fullName evidence="1">Valyl-tRNA synthetase</fullName>
        <shortName evidence="1">ValRS</shortName>
    </alternativeName>
</protein>
<sequence length="880" mass="100538">MTNELTPKFNPTEVEAGRYEKWLEADVFKPSGNPDAEPYSIVIPPPNVTGKLHLGHAWDTTLQDIIIRQKRMQGFDTLWLPGMDHAGIATQAKVAARLAEDGILPQDLGREKFLDKVWEWKDEYATTIKEQWGKMGISVDYSRERFTLDEGLSQAVRKVFVQLYNKGWIYRGEKLINWDPKAMTALSDIEVIHKEIDGAFYHITYQIEGSDEFVEIATTRPETFLGDTAVIVNEKDERYKHLVGKNVILPIINRVIPILTDDHADMEKGTGVVKITPAHDPNDFEVAMRHDLPMINMMNNDGTINENGGKYEGLDRFEARKQIVADLKELGQLVDIKPVRHEVGHSERTGVVVEPRLSTQWFVKMDELAKNAIANQTTEDAVEFYPPRFNDTFMQWMENVHDWVISRQLWWGHQIPAWYNEAGEMYVGEEAPEGEGWTQDEDVLDTWFSSALWPFSTMGWPDENSADFIRYFPTSTLVTGYDIIFFWVSRMIFQSLEFTGKSPFHNVLIHGLIRDEEGRKMSKSLGNGIDPMDVIEKYGADALRWFLSNGSAPGQDVRFSYDKMDAAWNFINKIWNVSRYILMNAEDISADAVSSALTKVANKTAGNVTDRWILTRLNDTVERVTEQMDKFEFGVAGHILYNFIWDEFANWYLELTKEVMFGEDEAEKDITRAVLLHVLDQVLRLLHPIMPFFTEEIFEKLPNTSGSIVVAEYPKVRPEFNDDKASEGVAMLIELITAVRNIRAEVNTPLSKAVPMLIKSEHADFLNAVSPYISRFTNPSELTIAKDLAVPEQAMSAVITGAELYLPLAGLINIEEEIARLEKELAKWQKELDLVNKKLGNERFVANAKAEVVQKEKDKLADYQEKFDTVKARIAELKEN</sequence>